<accession>Q746Q4</accession>
<evidence type="ECO:0000255" key="1">
    <source>
        <dbReference type="HAMAP-Rule" id="MF_00129"/>
    </source>
</evidence>
<comment type="function">
    <text evidence="1">NAD-binding protein involved in the addition of a carboxymethylaminomethyl (cmnm) group at the wobble position (U34) of certain tRNAs, forming tRNA-cmnm(5)s(2)U34.</text>
</comment>
<comment type="cofactor">
    <cofactor evidence="1">
        <name>FAD</name>
        <dbReference type="ChEBI" id="CHEBI:57692"/>
    </cofactor>
</comment>
<comment type="subunit">
    <text evidence="1">Homodimer. Heterotetramer of two MnmE and two MnmG subunits.</text>
</comment>
<comment type="subcellular location">
    <subcellularLocation>
        <location evidence="1">Cytoplasm</location>
    </subcellularLocation>
</comment>
<comment type="similarity">
    <text evidence="1">Belongs to the MnmG family.</text>
</comment>
<proteinExistence type="inferred from homology"/>
<organism>
    <name type="scientific">Geobacter sulfurreducens (strain ATCC 51573 / DSM 12127 / PCA)</name>
    <dbReference type="NCBI Taxonomy" id="243231"/>
    <lineage>
        <taxon>Bacteria</taxon>
        <taxon>Pseudomonadati</taxon>
        <taxon>Thermodesulfobacteriota</taxon>
        <taxon>Desulfuromonadia</taxon>
        <taxon>Geobacterales</taxon>
        <taxon>Geobacteraceae</taxon>
        <taxon>Geobacter</taxon>
    </lineage>
</organism>
<reference key="1">
    <citation type="journal article" date="2003" name="Science">
        <title>Genome of Geobacter sulfurreducens: metal reduction in subsurface environments.</title>
        <authorList>
            <person name="Methe B.A."/>
            <person name="Nelson K.E."/>
            <person name="Eisen J.A."/>
            <person name="Paulsen I.T."/>
            <person name="Nelson W.C."/>
            <person name="Heidelberg J.F."/>
            <person name="Wu D."/>
            <person name="Wu M."/>
            <person name="Ward N.L."/>
            <person name="Beanan M.J."/>
            <person name="Dodson R.J."/>
            <person name="Madupu R."/>
            <person name="Brinkac L.M."/>
            <person name="Daugherty S.C."/>
            <person name="DeBoy R.T."/>
            <person name="Durkin A.S."/>
            <person name="Gwinn M.L."/>
            <person name="Kolonay J.F."/>
            <person name="Sullivan S.A."/>
            <person name="Haft D.H."/>
            <person name="Selengut J."/>
            <person name="Davidsen T.M."/>
            <person name="Zafar N."/>
            <person name="White O."/>
            <person name="Tran B."/>
            <person name="Romero C."/>
            <person name="Forberger H.A."/>
            <person name="Weidman J.F."/>
            <person name="Khouri H.M."/>
            <person name="Feldblyum T.V."/>
            <person name="Utterback T.R."/>
            <person name="Van Aken S.E."/>
            <person name="Lovley D.R."/>
            <person name="Fraser C.M."/>
        </authorList>
    </citation>
    <scope>NUCLEOTIDE SEQUENCE [LARGE SCALE GENOMIC DNA]</scope>
    <source>
        <strain>ATCC 51573 / DSM 12127 / PCA</strain>
    </source>
</reference>
<name>MNMG_GEOSL</name>
<keyword id="KW-0963">Cytoplasm</keyword>
<keyword id="KW-0274">FAD</keyword>
<keyword id="KW-0285">Flavoprotein</keyword>
<keyword id="KW-0520">NAD</keyword>
<keyword id="KW-1185">Reference proteome</keyword>
<keyword id="KW-0819">tRNA processing</keyword>
<feature type="chain" id="PRO_0000117106" description="tRNA uridine 5-carboxymethylaminomethyl modification enzyme MnmG">
    <location>
        <begin position="1"/>
        <end position="627"/>
    </location>
</feature>
<feature type="binding site" evidence="1">
    <location>
        <begin position="16"/>
        <end position="21"/>
    </location>
    <ligand>
        <name>FAD</name>
        <dbReference type="ChEBI" id="CHEBI:57692"/>
    </ligand>
</feature>
<feature type="binding site" evidence="1">
    <location>
        <position position="128"/>
    </location>
    <ligand>
        <name>FAD</name>
        <dbReference type="ChEBI" id="CHEBI:57692"/>
    </ligand>
</feature>
<feature type="binding site" evidence="1">
    <location>
        <position position="183"/>
    </location>
    <ligand>
        <name>FAD</name>
        <dbReference type="ChEBI" id="CHEBI:57692"/>
    </ligand>
</feature>
<feature type="binding site" evidence="1">
    <location>
        <begin position="275"/>
        <end position="289"/>
    </location>
    <ligand>
        <name>NAD(+)</name>
        <dbReference type="ChEBI" id="CHEBI:57540"/>
    </ligand>
</feature>
<feature type="binding site" evidence="1">
    <location>
        <position position="372"/>
    </location>
    <ligand>
        <name>FAD</name>
        <dbReference type="ChEBI" id="CHEBI:57692"/>
    </ligand>
</feature>
<dbReference type="EMBL" id="AE017180">
    <property type="protein sequence ID" value="AAR36854.1"/>
    <property type="molecule type" value="Genomic_DNA"/>
</dbReference>
<dbReference type="RefSeq" id="NP_954504.1">
    <property type="nucleotide sequence ID" value="NC_002939.5"/>
</dbReference>
<dbReference type="RefSeq" id="WP_010944073.1">
    <property type="nucleotide sequence ID" value="NC_002939.5"/>
</dbReference>
<dbReference type="SMR" id="Q746Q4"/>
<dbReference type="FunCoup" id="Q746Q4">
    <property type="interactions" value="572"/>
</dbReference>
<dbReference type="STRING" id="243231.GSU3464"/>
<dbReference type="EnsemblBacteria" id="AAR36854">
    <property type="protein sequence ID" value="AAR36854"/>
    <property type="gene ID" value="GSU3464"/>
</dbReference>
<dbReference type="KEGG" id="gsu:GSU3464"/>
<dbReference type="PATRIC" id="fig|243231.5.peg.3486"/>
<dbReference type="eggNOG" id="COG0445">
    <property type="taxonomic scope" value="Bacteria"/>
</dbReference>
<dbReference type="HOGENOM" id="CLU_007831_2_2_7"/>
<dbReference type="InParanoid" id="Q746Q4"/>
<dbReference type="OrthoDB" id="9815560at2"/>
<dbReference type="Proteomes" id="UP000000577">
    <property type="component" value="Chromosome"/>
</dbReference>
<dbReference type="GO" id="GO:0005829">
    <property type="term" value="C:cytosol"/>
    <property type="evidence" value="ECO:0000318"/>
    <property type="project" value="GO_Central"/>
</dbReference>
<dbReference type="GO" id="GO:0050660">
    <property type="term" value="F:flavin adenine dinucleotide binding"/>
    <property type="evidence" value="ECO:0000318"/>
    <property type="project" value="GO_Central"/>
</dbReference>
<dbReference type="GO" id="GO:0030488">
    <property type="term" value="P:tRNA methylation"/>
    <property type="evidence" value="ECO:0000318"/>
    <property type="project" value="GO_Central"/>
</dbReference>
<dbReference type="GO" id="GO:0002098">
    <property type="term" value="P:tRNA wobble uridine modification"/>
    <property type="evidence" value="ECO:0000318"/>
    <property type="project" value="GO_Central"/>
</dbReference>
<dbReference type="FunFam" id="1.10.10.1800:FF:000001">
    <property type="entry name" value="tRNA uridine 5-carboxymethylaminomethyl modification enzyme MnmG"/>
    <property type="match status" value="1"/>
</dbReference>
<dbReference type="FunFam" id="1.10.150.570:FF:000001">
    <property type="entry name" value="tRNA uridine 5-carboxymethylaminomethyl modification enzyme MnmG"/>
    <property type="match status" value="1"/>
</dbReference>
<dbReference type="FunFam" id="3.50.50.60:FF:000002">
    <property type="entry name" value="tRNA uridine 5-carboxymethylaminomethyl modification enzyme MnmG"/>
    <property type="match status" value="1"/>
</dbReference>
<dbReference type="FunFam" id="3.50.50.60:FF:000063">
    <property type="entry name" value="tRNA uridine 5-carboxymethylaminomethyl modification enzyme MnmG"/>
    <property type="match status" value="1"/>
</dbReference>
<dbReference type="Gene3D" id="3.50.50.60">
    <property type="entry name" value="FAD/NAD(P)-binding domain"/>
    <property type="match status" value="2"/>
</dbReference>
<dbReference type="Gene3D" id="1.10.150.570">
    <property type="entry name" value="GidA associated domain, C-terminal subdomain"/>
    <property type="match status" value="1"/>
</dbReference>
<dbReference type="Gene3D" id="1.10.10.1800">
    <property type="entry name" value="tRNA uridine 5-carboxymethylaminomethyl modification enzyme MnmG/GidA"/>
    <property type="match status" value="1"/>
</dbReference>
<dbReference type="HAMAP" id="MF_00129">
    <property type="entry name" value="MnmG_GidA"/>
    <property type="match status" value="1"/>
</dbReference>
<dbReference type="InterPro" id="IPR036188">
    <property type="entry name" value="FAD/NAD-bd_sf"/>
</dbReference>
<dbReference type="InterPro" id="IPR049312">
    <property type="entry name" value="GIDA_C_N"/>
</dbReference>
<dbReference type="InterPro" id="IPR004416">
    <property type="entry name" value="MnmG"/>
</dbReference>
<dbReference type="InterPro" id="IPR002218">
    <property type="entry name" value="MnmG-rel"/>
</dbReference>
<dbReference type="InterPro" id="IPR020595">
    <property type="entry name" value="MnmG-rel_CS"/>
</dbReference>
<dbReference type="InterPro" id="IPR026904">
    <property type="entry name" value="MnmG_C"/>
</dbReference>
<dbReference type="InterPro" id="IPR047001">
    <property type="entry name" value="MnmG_C_subdom"/>
</dbReference>
<dbReference type="InterPro" id="IPR044920">
    <property type="entry name" value="MnmG_C_subdom_sf"/>
</dbReference>
<dbReference type="InterPro" id="IPR040131">
    <property type="entry name" value="MnmG_N"/>
</dbReference>
<dbReference type="NCBIfam" id="TIGR00136">
    <property type="entry name" value="mnmG_gidA"/>
    <property type="match status" value="1"/>
</dbReference>
<dbReference type="PANTHER" id="PTHR11806">
    <property type="entry name" value="GLUCOSE INHIBITED DIVISION PROTEIN A"/>
    <property type="match status" value="1"/>
</dbReference>
<dbReference type="PANTHER" id="PTHR11806:SF0">
    <property type="entry name" value="PROTEIN MTO1 HOMOLOG, MITOCHONDRIAL"/>
    <property type="match status" value="1"/>
</dbReference>
<dbReference type="Pfam" id="PF01134">
    <property type="entry name" value="GIDA"/>
    <property type="match status" value="1"/>
</dbReference>
<dbReference type="Pfam" id="PF21680">
    <property type="entry name" value="GIDA_C_1st"/>
    <property type="match status" value="1"/>
</dbReference>
<dbReference type="Pfam" id="PF13932">
    <property type="entry name" value="SAM_GIDA_C"/>
    <property type="match status" value="1"/>
</dbReference>
<dbReference type="PRINTS" id="PR00411">
    <property type="entry name" value="PNDRDTASEI"/>
</dbReference>
<dbReference type="SMART" id="SM01228">
    <property type="entry name" value="GIDA_assoc_3"/>
    <property type="match status" value="1"/>
</dbReference>
<dbReference type="SUPFAM" id="SSF51905">
    <property type="entry name" value="FAD/NAD(P)-binding domain"/>
    <property type="match status" value="1"/>
</dbReference>
<dbReference type="PROSITE" id="PS01280">
    <property type="entry name" value="GIDA_1"/>
    <property type="match status" value="1"/>
</dbReference>
<dbReference type="PROSITE" id="PS01281">
    <property type="entry name" value="GIDA_2"/>
    <property type="match status" value="1"/>
</dbReference>
<protein>
    <recommendedName>
        <fullName evidence="1">tRNA uridine 5-carboxymethylaminomethyl modification enzyme MnmG</fullName>
    </recommendedName>
    <alternativeName>
        <fullName evidence="1">Glucose-inhibited division protein A</fullName>
    </alternativeName>
</protein>
<sequence length="627" mass="69728">MNLIDYEKQYDVIVAGAGHAGCEAALAAARMGCETLLLTINLDAIALMSCNPAIGGLAKGHLVKEIDALGGEMGKNIDATGIQYRILNTRKGPAVRASRAQADKQLYRLRMKHVMEEQEHLSLKQGEVTGLVVEDGRVRGVVTKVGVRFLGKTVILTTGTFMRGLIHVGLTNYPGGRAGDLPSVGLSDQLRDLGFTVGRLKTGTPARLDGNTIDFSRLEPQYGDDPPVPFSFSTERIDRPQLPCYIAYTNERTHEIIRSGLDRSPLYSGVIEGVGPRYCPSIEDKVMRFPDKDRHQSFLEPEGRDTVEYYPSGLSTSLPIDIQYRLYRSIEGLENVEIMRPAYAIEYDYVDPIQLHTSLETKLIRNLYHAGQINGTSGYEEAAGQGLMAGINAALRVQGEEPLVLGRDEAYIGVMIDDLVTLGTREPYRMFTSRAEYRLLLREDNADLRLRERGHAVGLVRDEEYRLFLEKRERIGAELERLRTAKLLPSEADPSFLETYGMTDLRNALTFEQLLRRPDITYEELSQIDPVAGMVPPSVKEQVEIQIKYQGYIERQLDQVARARKLEGTRIPDDLDYTVIPGLSAEVREKLLRFLPDTLGQASRIQGVTPAAVGILSVAIKSRSASS</sequence>
<gene>
    <name evidence="1" type="primary">mnmG</name>
    <name evidence="1" type="synonym">gidA</name>
    <name type="ordered locus">GSU3464</name>
</gene>